<accession>P85842</accession>
<proteinExistence type="evidence at protein level"/>
<dbReference type="EC" id="3.4.24.-"/>
<dbReference type="GO" id="GO:0005576">
    <property type="term" value="C:extracellular region"/>
    <property type="evidence" value="ECO:0007669"/>
    <property type="project" value="UniProtKB-SubCell"/>
</dbReference>
<dbReference type="GO" id="GO:0046872">
    <property type="term" value="F:metal ion binding"/>
    <property type="evidence" value="ECO:0007669"/>
    <property type="project" value="UniProtKB-KW"/>
</dbReference>
<dbReference type="GO" id="GO:0008237">
    <property type="term" value="F:metallopeptidase activity"/>
    <property type="evidence" value="ECO:0007669"/>
    <property type="project" value="UniProtKB-KW"/>
</dbReference>
<dbReference type="GO" id="GO:0090729">
    <property type="term" value="F:toxin activity"/>
    <property type="evidence" value="ECO:0007669"/>
    <property type="project" value="UniProtKB-KW"/>
</dbReference>
<dbReference type="GO" id="GO:0006508">
    <property type="term" value="P:proteolysis"/>
    <property type="evidence" value="ECO:0007669"/>
    <property type="project" value="UniProtKB-KW"/>
</dbReference>
<dbReference type="Gene3D" id="3.40.390.10">
    <property type="entry name" value="Collagenase (Catalytic Domain)"/>
    <property type="match status" value="1"/>
</dbReference>
<dbReference type="InterPro" id="IPR024079">
    <property type="entry name" value="MetalloPept_cat_dom_sf"/>
</dbReference>
<dbReference type="SUPFAM" id="SSF55486">
    <property type="entry name" value="Metalloproteases ('zincins'), catalytic domain"/>
    <property type="match status" value="1"/>
</dbReference>
<evidence type="ECO:0000250" key="1"/>
<evidence type="ECO:0000250" key="2">
    <source>
        <dbReference type="UniProtKB" id="Q9PW35"/>
    </source>
</evidence>
<evidence type="ECO:0000269" key="3">
    <source ref="1"/>
</evidence>
<evidence type="ECO:0000303" key="4">
    <source ref="1"/>
</evidence>
<evidence type="ECO:0000305" key="5"/>
<organism>
    <name type="scientific">Tityus serrulatus</name>
    <name type="common">Brazilian scorpion</name>
    <dbReference type="NCBI Taxonomy" id="6887"/>
    <lineage>
        <taxon>Eukaryota</taxon>
        <taxon>Metazoa</taxon>
        <taxon>Ecdysozoa</taxon>
        <taxon>Arthropoda</taxon>
        <taxon>Chelicerata</taxon>
        <taxon>Arachnida</taxon>
        <taxon>Scorpiones</taxon>
        <taxon>Buthida</taxon>
        <taxon>Buthoidea</taxon>
        <taxon>Buthidae</taxon>
        <taxon>Tityus</taxon>
    </lineage>
</organism>
<comment type="cofactor">
    <cofactor evidence="1">
        <name>Zn(2+)</name>
        <dbReference type="ChEBI" id="CHEBI:29105"/>
    </cofactor>
    <text evidence="1">Binds 1 zinc ion per subunit.</text>
</comment>
<comment type="subcellular location">
    <subcellularLocation>
        <location evidence="3">Secreted</location>
    </subcellularLocation>
</comment>
<comment type="tissue specificity">
    <text evidence="3">Expressed by the venom gland.</text>
</comment>
<comment type="similarity">
    <text evidence="5">Belongs to the venom metalloproteinase (M12B) family.</text>
</comment>
<name>VMXP_TITSE</name>
<feature type="chain" id="PRO_0000343514" description="Venom metalloproteinase">
    <location>
        <begin position="1"/>
        <end position="86" status="greater than"/>
    </location>
</feature>
<feature type="active site" evidence="2">
    <location>
        <position position="68"/>
    </location>
</feature>
<feature type="binding site" evidence="1">
    <location>
        <position position="7"/>
    </location>
    <ligand>
        <name>Ca(2+)</name>
        <dbReference type="ChEBI" id="CHEBI:29108"/>
    </ligand>
</feature>
<feature type="binding site" evidence="1">
    <location>
        <position position="67"/>
    </location>
    <ligand>
        <name>Zn(2+)</name>
        <dbReference type="ChEBI" id="CHEBI:29105"/>
        <note>catalytic</note>
    </ligand>
</feature>
<feature type="binding site" evidence="1">
    <location>
        <position position="71"/>
    </location>
    <ligand>
        <name>Zn(2+)</name>
        <dbReference type="ChEBI" id="CHEBI:29105"/>
        <note>catalytic</note>
    </ligand>
</feature>
<feature type="binding site" evidence="1">
    <location>
        <position position="77"/>
    </location>
    <ligand>
        <name>Zn(2+)</name>
        <dbReference type="ChEBI" id="CHEBI:29105"/>
        <note>catalytic</note>
    </ligand>
</feature>
<feature type="non-consecutive residues" evidence="4">
    <location>
        <begin position="48"/>
        <end position="49"/>
    </location>
</feature>
<feature type="non-terminal residue" evidence="4">
    <location>
        <position position="86"/>
    </location>
</feature>
<reference evidence="5" key="1">
    <citation type="submission" date="2008-05" db="UniProtKB">
        <title>Metalloproteinase from venom of Brazilian scorpion Tityus serrulatus.</title>
        <authorList>
            <person name="Richardson M."/>
            <person name="Borges M.H."/>
            <person name="Cordeiro M.N."/>
            <person name="Pimenta A.M.C."/>
            <person name="de Lima M.E."/>
            <person name="Rates B."/>
        </authorList>
    </citation>
    <scope>PROTEIN SEQUENCE</scope>
    <scope>SUBCELLULAR LOCATION</scope>
    <scope>TISSUE SPECIFICITY</scope>
    <source>
        <tissue evidence="3">Venom</tissue>
    </source>
</reference>
<protein>
    <recommendedName>
        <fullName>Venom metalloproteinase</fullName>
        <shortName>VMP</shortName>
        <ecNumber>3.4.24.-</ecNumber>
    </recommendedName>
</protein>
<keyword id="KW-0106">Calcium</keyword>
<keyword id="KW-0903">Direct protein sequencing</keyword>
<keyword id="KW-0378">Hydrolase</keyword>
<keyword id="KW-0479">Metal-binding</keyword>
<keyword id="KW-0482">Metalloprotease</keyword>
<keyword id="KW-0645">Protease</keyword>
<keyword id="KW-0964">Secreted</keyword>
<keyword id="KW-0800">Toxin</keyword>
<keyword id="KW-0862">Zinc</keyword>
<sequence length="86" mass="9642">SPCIIIDYLCVTETCFCERFKTNKELLEYITVMFTGVQNLLDTLNLGIVGVAQDYSDYNERVDTVAHETAHLIGAPHDEEGPCQDT</sequence>